<feature type="chain" id="PRO_0000175279" description="DNA-directed RNA polymerase subunit alpha">
    <location>
        <begin position="1"/>
        <end position="329"/>
    </location>
</feature>
<feature type="region of interest" description="Alpha N-terminal domain (alpha-NTD)" evidence="1">
    <location>
        <begin position="1"/>
        <end position="235"/>
    </location>
</feature>
<feature type="region of interest" description="Alpha C-terminal domain (alpha-CTD)" evidence="1">
    <location>
        <begin position="249"/>
        <end position="329"/>
    </location>
</feature>
<name>RPOA_BUCAI</name>
<evidence type="ECO:0000255" key="1">
    <source>
        <dbReference type="HAMAP-Rule" id="MF_00059"/>
    </source>
</evidence>
<dbReference type="EC" id="2.7.7.6" evidence="1"/>
<dbReference type="EMBL" id="BA000003">
    <property type="protein sequence ID" value="BAB13192.1"/>
    <property type="molecule type" value="Genomic_DNA"/>
</dbReference>
<dbReference type="RefSeq" id="NP_240306.1">
    <property type="nucleotide sequence ID" value="NC_002528.1"/>
</dbReference>
<dbReference type="RefSeq" id="WP_010896144.1">
    <property type="nucleotide sequence ID" value="NZ_AP036055.1"/>
</dbReference>
<dbReference type="SMR" id="P57566"/>
<dbReference type="STRING" id="563178.BUAP5A_492"/>
<dbReference type="EnsemblBacteria" id="BAB13192">
    <property type="protein sequence ID" value="BAB13192"/>
    <property type="gene ID" value="BAB13192"/>
</dbReference>
<dbReference type="KEGG" id="buc:BU499"/>
<dbReference type="PATRIC" id="fig|107806.10.peg.504"/>
<dbReference type="eggNOG" id="COG0202">
    <property type="taxonomic scope" value="Bacteria"/>
</dbReference>
<dbReference type="HOGENOM" id="CLU_053084_0_0_6"/>
<dbReference type="Proteomes" id="UP000001806">
    <property type="component" value="Chromosome"/>
</dbReference>
<dbReference type="GO" id="GO:0005737">
    <property type="term" value="C:cytoplasm"/>
    <property type="evidence" value="ECO:0007669"/>
    <property type="project" value="UniProtKB-ARBA"/>
</dbReference>
<dbReference type="GO" id="GO:0000428">
    <property type="term" value="C:DNA-directed RNA polymerase complex"/>
    <property type="evidence" value="ECO:0007669"/>
    <property type="project" value="UniProtKB-KW"/>
</dbReference>
<dbReference type="GO" id="GO:0003677">
    <property type="term" value="F:DNA binding"/>
    <property type="evidence" value="ECO:0007669"/>
    <property type="project" value="UniProtKB-UniRule"/>
</dbReference>
<dbReference type="GO" id="GO:0003899">
    <property type="term" value="F:DNA-directed RNA polymerase activity"/>
    <property type="evidence" value="ECO:0007669"/>
    <property type="project" value="UniProtKB-UniRule"/>
</dbReference>
<dbReference type="GO" id="GO:0046983">
    <property type="term" value="F:protein dimerization activity"/>
    <property type="evidence" value="ECO:0007669"/>
    <property type="project" value="InterPro"/>
</dbReference>
<dbReference type="GO" id="GO:0006351">
    <property type="term" value="P:DNA-templated transcription"/>
    <property type="evidence" value="ECO:0007669"/>
    <property type="project" value="UniProtKB-UniRule"/>
</dbReference>
<dbReference type="CDD" id="cd06928">
    <property type="entry name" value="RNAP_alpha_NTD"/>
    <property type="match status" value="1"/>
</dbReference>
<dbReference type="FunFam" id="1.10.150.20:FF:000001">
    <property type="entry name" value="DNA-directed RNA polymerase subunit alpha"/>
    <property type="match status" value="1"/>
</dbReference>
<dbReference type="FunFam" id="2.170.120.12:FF:000001">
    <property type="entry name" value="DNA-directed RNA polymerase subunit alpha"/>
    <property type="match status" value="1"/>
</dbReference>
<dbReference type="Gene3D" id="1.10.150.20">
    <property type="entry name" value="5' to 3' exonuclease, C-terminal subdomain"/>
    <property type="match status" value="1"/>
</dbReference>
<dbReference type="Gene3D" id="2.170.120.12">
    <property type="entry name" value="DNA-directed RNA polymerase, insert domain"/>
    <property type="match status" value="1"/>
</dbReference>
<dbReference type="Gene3D" id="3.30.1360.10">
    <property type="entry name" value="RNA polymerase, RBP11-like subunit"/>
    <property type="match status" value="1"/>
</dbReference>
<dbReference type="HAMAP" id="MF_00059">
    <property type="entry name" value="RNApol_bact_RpoA"/>
    <property type="match status" value="1"/>
</dbReference>
<dbReference type="InterPro" id="IPR011262">
    <property type="entry name" value="DNA-dir_RNA_pol_insert"/>
</dbReference>
<dbReference type="InterPro" id="IPR011263">
    <property type="entry name" value="DNA-dir_RNA_pol_RpoA/D/Rpb3"/>
</dbReference>
<dbReference type="InterPro" id="IPR011773">
    <property type="entry name" value="DNA-dir_RpoA"/>
</dbReference>
<dbReference type="InterPro" id="IPR036603">
    <property type="entry name" value="RBP11-like"/>
</dbReference>
<dbReference type="InterPro" id="IPR011260">
    <property type="entry name" value="RNAP_asu_C"/>
</dbReference>
<dbReference type="InterPro" id="IPR036643">
    <property type="entry name" value="RNApol_insert_sf"/>
</dbReference>
<dbReference type="NCBIfam" id="NF003513">
    <property type="entry name" value="PRK05182.1-2"/>
    <property type="match status" value="1"/>
</dbReference>
<dbReference type="NCBIfam" id="NF003519">
    <property type="entry name" value="PRK05182.2-5"/>
    <property type="match status" value="1"/>
</dbReference>
<dbReference type="NCBIfam" id="TIGR02027">
    <property type="entry name" value="rpoA"/>
    <property type="match status" value="1"/>
</dbReference>
<dbReference type="Pfam" id="PF01000">
    <property type="entry name" value="RNA_pol_A_bac"/>
    <property type="match status" value="1"/>
</dbReference>
<dbReference type="Pfam" id="PF03118">
    <property type="entry name" value="RNA_pol_A_CTD"/>
    <property type="match status" value="1"/>
</dbReference>
<dbReference type="Pfam" id="PF01193">
    <property type="entry name" value="RNA_pol_L"/>
    <property type="match status" value="1"/>
</dbReference>
<dbReference type="SMART" id="SM00662">
    <property type="entry name" value="RPOLD"/>
    <property type="match status" value="1"/>
</dbReference>
<dbReference type="SUPFAM" id="SSF47789">
    <property type="entry name" value="C-terminal domain of RNA polymerase alpha subunit"/>
    <property type="match status" value="1"/>
</dbReference>
<dbReference type="SUPFAM" id="SSF56553">
    <property type="entry name" value="Insert subdomain of RNA polymerase alpha subunit"/>
    <property type="match status" value="1"/>
</dbReference>
<dbReference type="SUPFAM" id="SSF55257">
    <property type="entry name" value="RBP11-like subunits of RNA polymerase"/>
    <property type="match status" value="1"/>
</dbReference>
<proteinExistence type="inferred from homology"/>
<organism>
    <name type="scientific">Buchnera aphidicola subsp. Acyrthosiphon pisum (strain APS)</name>
    <name type="common">Acyrthosiphon pisum symbiotic bacterium</name>
    <dbReference type="NCBI Taxonomy" id="107806"/>
    <lineage>
        <taxon>Bacteria</taxon>
        <taxon>Pseudomonadati</taxon>
        <taxon>Pseudomonadota</taxon>
        <taxon>Gammaproteobacteria</taxon>
        <taxon>Enterobacterales</taxon>
        <taxon>Erwiniaceae</taxon>
        <taxon>Buchnera</taxon>
    </lineage>
</organism>
<sequence>MQNSIMDFLRPRLVDIEQISATHTKVTLEPLERGFGHTLGNALRRILLSSMPGCAVTEVEIDGVLHEYSTKEGVQEDVLEILLNLKALAVKVYGKDETLLTLHKSGIGSITAADIIHDGDVEIIKPQHVICHLTDENASIKMRIKVQRGRGYIPASSRVHLEEDSRPIGCLLVDACYSPINRISYNVEAARVEQRTDLDKLVIEMETNGTIDPEEAIRRAATILAEQLEAFVDLRDIREPEFKEEKPEFEPILLRPVDDLELTVRSANCLKAEAIHYIGDLVQRTEVELLKTPNLGKKSLTEIKDVLASRSLSLGMRLENWPPSSILDE</sequence>
<keyword id="KW-0240">DNA-directed RNA polymerase</keyword>
<keyword id="KW-0548">Nucleotidyltransferase</keyword>
<keyword id="KW-1185">Reference proteome</keyword>
<keyword id="KW-0804">Transcription</keyword>
<keyword id="KW-0808">Transferase</keyword>
<gene>
    <name evidence="1" type="primary">rpoA</name>
    <name type="ordered locus">BU499</name>
</gene>
<reference key="1">
    <citation type="journal article" date="2000" name="Nature">
        <title>Genome sequence of the endocellular bacterial symbiont of aphids Buchnera sp. APS.</title>
        <authorList>
            <person name="Shigenobu S."/>
            <person name="Watanabe H."/>
            <person name="Hattori M."/>
            <person name="Sakaki Y."/>
            <person name="Ishikawa H."/>
        </authorList>
    </citation>
    <scope>NUCLEOTIDE SEQUENCE [LARGE SCALE GENOMIC DNA]</scope>
    <source>
        <strain>APS</strain>
    </source>
</reference>
<protein>
    <recommendedName>
        <fullName evidence="1">DNA-directed RNA polymerase subunit alpha</fullName>
        <shortName evidence="1">RNAP subunit alpha</shortName>
        <ecNumber evidence="1">2.7.7.6</ecNumber>
    </recommendedName>
    <alternativeName>
        <fullName evidence="1">RNA polymerase subunit alpha</fullName>
    </alternativeName>
    <alternativeName>
        <fullName evidence="1">Transcriptase subunit alpha</fullName>
    </alternativeName>
</protein>
<comment type="function">
    <text evidence="1">DNA-dependent RNA polymerase catalyzes the transcription of DNA into RNA using the four ribonucleoside triphosphates as substrates.</text>
</comment>
<comment type="catalytic activity">
    <reaction evidence="1">
        <text>RNA(n) + a ribonucleoside 5'-triphosphate = RNA(n+1) + diphosphate</text>
        <dbReference type="Rhea" id="RHEA:21248"/>
        <dbReference type="Rhea" id="RHEA-COMP:14527"/>
        <dbReference type="Rhea" id="RHEA-COMP:17342"/>
        <dbReference type="ChEBI" id="CHEBI:33019"/>
        <dbReference type="ChEBI" id="CHEBI:61557"/>
        <dbReference type="ChEBI" id="CHEBI:140395"/>
        <dbReference type="EC" id="2.7.7.6"/>
    </reaction>
</comment>
<comment type="subunit">
    <text evidence="1">Homodimer. The RNAP catalytic core consists of 2 alpha, 1 beta, 1 beta' and 1 omega subunit. When a sigma factor is associated with the core the holoenzyme is formed, which can initiate transcription.</text>
</comment>
<comment type="domain">
    <text evidence="1">The N-terminal domain is essential for RNAP assembly and basal transcription, whereas the C-terminal domain is involved in interaction with transcriptional regulators and with upstream promoter elements.</text>
</comment>
<comment type="similarity">
    <text evidence="1">Belongs to the RNA polymerase alpha chain family.</text>
</comment>
<accession>P57566</accession>